<reference key="1">
    <citation type="journal article" date="2004" name="J. Bacteriol.">
        <title>Reconstruction of the central carbohydrate metabolism of Thermoproteus tenax using genomic and biochemical data.</title>
        <authorList>
            <person name="Siebers B."/>
            <person name="Tjaden B."/>
            <person name="Michalke K."/>
            <person name="Doerr C."/>
            <person name="Ahmed H."/>
            <person name="Zaparty M."/>
            <person name="Gordon P."/>
            <person name="Sensen C.W."/>
            <person name="Zibat A."/>
            <person name="Klenk H.-P."/>
            <person name="Schuster S.C."/>
            <person name="Hensel R."/>
        </authorList>
    </citation>
    <scope>NUCLEOTIDE SEQUENCE [GENOMIC DNA]</scope>
</reference>
<reference key="2">
    <citation type="journal article" date="2005" name="Biochem. J.">
        <title>The semi-phosphorylative Entner-Doudoroff pathway in hyperthermophilic archaea: a re-evaluation.</title>
        <authorList>
            <person name="Ahmed H."/>
            <person name="Ettema T.J."/>
            <person name="Tjaden B."/>
            <person name="Geerling A.C."/>
            <person name="van der Oost J."/>
            <person name="Siebers B."/>
        </authorList>
    </citation>
    <scope>FUNCTION</scope>
    <scope>CATALYTIC ACTIVITY</scope>
    <scope>BIOPHYSICOCHEMICAL PROPERTIES</scope>
</reference>
<dbReference type="EC" id="2.7.1.45"/>
<dbReference type="EMBL" id="AJ621283">
    <property type="protein sequence ID" value="CAF18464.1"/>
    <property type="molecule type" value="Genomic_DNA"/>
</dbReference>
<dbReference type="SMR" id="Q704D0"/>
<dbReference type="UniPathway" id="UPA00856">
    <property type="reaction ID" value="UER00828"/>
</dbReference>
<dbReference type="GO" id="GO:0008673">
    <property type="term" value="F:2-dehydro-3-deoxygluconokinase activity"/>
    <property type="evidence" value="ECO:0000314"/>
    <property type="project" value="UniProtKB"/>
</dbReference>
<dbReference type="GO" id="GO:0005524">
    <property type="term" value="F:ATP binding"/>
    <property type="evidence" value="ECO:0000314"/>
    <property type="project" value="UniProtKB"/>
</dbReference>
<dbReference type="GO" id="GO:0000166">
    <property type="term" value="F:nucleotide binding"/>
    <property type="evidence" value="ECO:0000314"/>
    <property type="project" value="UniProtKB"/>
</dbReference>
<dbReference type="GO" id="GO:0016310">
    <property type="term" value="P:phosphorylation"/>
    <property type="evidence" value="ECO:0000314"/>
    <property type="project" value="UniProtKB"/>
</dbReference>
<dbReference type="CDD" id="cd01166">
    <property type="entry name" value="KdgK"/>
    <property type="match status" value="1"/>
</dbReference>
<dbReference type="FunFam" id="3.40.1190.20:FF:000088">
    <property type="entry name" value="2-dehydro-3-deoxygluconokinase"/>
    <property type="match status" value="1"/>
</dbReference>
<dbReference type="Gene3D" id="3.40.1190.20">
    <property type="match status" value="1"/>
</dbReference>
<dbReference type="InterPro" id="IPR054939">
    <property type="entry name" value="KDG_KDGal_kin"/>
</dbReference>
<dbReference type="InterPro" id="IPR050306">
    <property type="entry name" value="PfkB_Carbo_kinase"/>
</dbReference>
<dbReference type="InterPro" id="IPR011611">
    <property type="entry name" value="PfkB_dom"/>
</dbReference>
<dbReference type="InterPro" id="IPR029056">
    <property type="entry name" value="Ribokinase-like"/>
</dbReference>
<dbReference type="NCBIfam" id="NF040938">
    <property type="entry name" value="KDG_KDGal_kin"/>
    <property type="match status" value="1"/>
</dbReference>
<dbReference type="PANTHER" id="PTHR43085">
    <property type="entry name" value="HEXOKINASE FAMILY MEMBER"/>
    <property type="match status" value="1"/>
</dbReference>
<dbReference type="PANTHER" id="PTHR43085:SF1">
    <property type="entry name" value="PSEUDOURIDINE KINASE-RELATED"/>
    <property type="match status" value="1"/>
</dbReference>
<dbReference type="Pfam" id="PF00294">
    <property type="entry name" value="PfkB"/>
    <property type="match status" value="1"/>
</dbReference>
<dbReference type="SUPFAM" id="SSF53613">
    <property type="entry name" value="Ribokinase-like"/>
    <property type="match status" value="1"/>
</dbReference>
<keyword id="KW-0067">ATP-binding</keyword>
<keyword id="KW-0119">Carbohydrate metabolism</keyword>
<keyword id="KW-0418">Kinase</keyword>
<keyword id="KW-0547">Nucleotide-binding</keyword>
<keyword id="KW-0808">Transferase</keyword>
<protein>
    <recommendedName>
        <fullName>2-dehydro-3-deoxygluconokinase</fullName>
        <ecNumber>2.7.1.45</ecNumber>
    </recommendedName>
    <alternativeName>
        <fullName>2-keto-3-deoxygluconokinase</fullName>
    </alternativeName>
    <alternativeName>
        <fullName>3-deoxy-2-oxo-D-gluconate kinase</fullName>
    </alternativeName>
    <alternativeName>
        <fullName>KDG kinase</fullName>
    </alternativeName>
</protein>
<feature type="chain" id="PRO_0000422664" description="2-dehydro-3-deoxygluconokinase">
    <location>
        <begin position="1"/>
        <end position="325"/>
    </location>
</feature>
<feature type="active site" description="Proton acceptor" evidence="2">
    <location>
        <position position="272"/>
    </location>
</feature>
<feature type="binding site" evidence="2">
    <location>
        <begin position="49"/>
        <end position="53"/>
    </location>
    <ligand>
        <name>substrate</name>
    </ligand>
</feature>
<feature type="binding site" evidence="2">
    <location>
        <position position="105"/>
    </location>
    <ligand>
        <name>substrate</name>
    </ligand>
</feature>
<feature type="binding site" evidence="2">
    <location>
        <begin position="121"/>
        <end position="123"/>
    </location>
    <ligand>
        <name>substrate</name>
    </ligand>
</feature>
<feature type="binding site" evidence="2">
    <location>
        <begin position="179"/>
        <end position="181"/>
    </location>
    <ligand>
        <name>ATP</name>
        <dbReference type="ChEBI" id="CHEBI:30616"/>
    </ligand>
</feature>
<feature type="binding site" evidence="2">
    <location>
        <position position="181"/>
    </location>
    <ligand>
        <name>substrate</name>
    </ligand>
</feature>
<feature type="binding site" evidence="2">
    <location>
        <begin position="240"/>
        <end position="245"/>
    </location>
    <ligand>
        <name>ATP</name>
        <dbReference type="ChEBI" id="CHEBI:30616"/>
    </ligand>
</feature>
<feature type="binding site" evidence="2">
    <location>
        <begin position="269"/>
        <end position="272"/>
    </location>
    <ligand>
        <name>ATP</name>
        <dbReference type="ChEBI" id="CHEBI:30616"/>
    </ligand>
</feature>
<feature type="binding site" evidence="2">
    <location>
        <position position="272"/>
    </location>
    <ligand>
        <name>substrate</name>
    </ligand>
</feature>
<feature type="binding site" evidence="2">
    <location>
        <position position="308"/>
    </location>
    <ligand>
        <name>substrate</name>
    </ligand>
</feature>
<sequence length="325" mass="34854">MAEGRCSQGKEPAEAMISLVALGEPLIQLNAVTPGPLRYVAYFEKHVAGSEANFCIAATMAGARCSLIARVGDDEFGRNIVEYLRGRGVDVSHVKVDPGAPTGIYFVQRHFPVPGRSRLIYYRKGSAGSRVGPDDVDSSLISSADAVHSTGITLALSDSANRAVHKAFGEAKRRTFDTNIRPALWPDLAAARRAILDVLNYGVDVLVTDPDDTQILLGVRDPEEAYRKYRELGVQTLVYKLGAEGAYVFWNGGSYFRDALKVAVEDPTGAGDAVAGYFVALYLSGVDPRRALDLAVAASALVVGVRGDNEALPSPREAEELLKAL</sequence>
<proteinExistence type="evidence at protein level"/>
<comment type="function">
    <text evidence="3">Involved in the degradation of glucose via the semi-phosphorylative Entner-Doudoroff pathway. Catalyzes the phosphorylation of 2-keto-3-deoxygluconate (KDG) yielding 2-keto-3-deoxy-6-phosphogluconate (KDPG).</text>
</comment>
<comment type="catalytic activity">
    <reaction evidence="3">
        <text>2-dehydro-3-deoxy-D-gluconate + ATP = 2-dehydro-3-deoxy-6-phospho-D-gluconate + ADP + H(+)</text>
        <dbReference type="Rhea" id="RHEA:14797"/>
        <dbReference type="ChEBI" id="CHEBI:15378"/>
        <dbReference type="ChEBI" id="CHEBI:30616"/>
        <dbReference type="ChEBI" id="CHEBI:57569"/>
        <dbReference type="ChEBI" id="CHEBI:57990"/>
        <dbReference type="ChEBI" id="CHEBI:456216"/>
        <dbReference type="EC" id="2.7.1.45"/>
    </reaction>
</comment>
<comment type="biophysicochemical properties">
    <kinetics>
        <KM evidence="3">0.178 mM for KDG (at 70 degrees Celsius and pH 7)</KM>
        <Vmax evidence="3">43.26 umol/min/mg enzyme (at 70 degrees Celsius and pH 7)</Vmax>
    </kinetics>
</comment>
<comment type="pathway">
    <text>Carbohydrate acid metabolism; 2-dehydro-3-deoxy-D-gluconate degradation; D-glyceraldehyde 3-phosphate and pyruvate from 2-dehydro-3-deoxy-D-gluconate: step 1/2.</text>
</comment>
<comment type="subunit">
    <text evidence="1">Homohexamer; trimer of dimers.</text>
</comment>
<comment type="similarity">
    <text evidence="4">Belongs to the carbohydrate kinase PfkB family.</text>
</comment>
<accession>Q704D0</accession>
<gene>
    <name type="primary">kdgK</name>
</gene>
<name>KDGK_THETE</name>
<evidence type="ECO:0000250" key="1"/>
<evidence type="ECO:0000250" key="2">
    <source>
        <dbReference type="UniProtKB" id="Q97U29"/>
    </source>
</evidence>
<evidence type="ECO:0000269" key="3">
    <source>
    </source>
</evidence>
<evidence type="ECO:0000305" key="4"/>
<organism>
    <name type="scientific">Thermoproteus tenax</name>
    <dbReference type="NCBI Taxonomy" id="2271"/>
    <lineage>
        <taxon>Archaea</taxon>
        <taxon>Thermoproteota</taxon>
        <taxon>Thermoprotei</taxon>
        <taxon>Thermoproteales</taxon>
        <taxon>Thermoproteaceae</taxon>
        <taxon>Thermoproteus</taxon>
    </lineage>
</organism>